<reference key="1">
    <citation type="journal article" date="2008" name="J. Bacteriol.">
        <title>Comparative genome sequence analysis of multidrug-resistant Acinetobacter baumannii.</title>
        <authorList>
            <person name="Adams M.D."/>
            <person name="Goglin K."/>
            <person name="Molyneaux N."/>
            <person name="Hujer K.M."/>
            <person name="Lavender H."/>
            <person name="Jamison J.J."/>
            <person name="MacDonald I.J."/>
            <person name="Martin K.M."/>
            <person name="Russo T."/>
            <person name="Campagnari A.A."/>
            <person name="Hujer A.M."/>
            <person name="Bonomo R.A."/>
            <person name="Gill S.R."/>
        </authorList>
    </citation>
    <scope>NUCLEOTIDE SEQUENCE [LARGE SCALE GENOMIC DNA]</scope>
    <source>
        <strain>AB0057</strain>
    </source>
</reference>
<organism>
    <name type="scientific">Acinetobacter baumannii (strain AB0057)</name>
    <dbReference type="NCBI Taxonomy" id="480119"/>
    <lineage>
        <taxon>Bacteria</taxon>
        <taxon>Pseudomonadati</taxon>
        <taxon>Pseudomonadota</taxon>
        <taxon>Gammaproteobacteria</taxon>
        <taxon>Moraxellales</taxon>
        <taxon>Moraxellaceae</taxon>
        <taxon>Acinetobacter</taxon>
        <taxon>Acinetobacter calcoaceticus/baumannii complex</taxon>
    </lineage>
</organism>
<protein>
    <recommendedName>
        <fullName evidence="1">Aspartate 1-decarboxylase</fullName>
        <ecNumber evidence="1">4.1.1.11</ecNumber>
    </recommendedName>
    <alternativeName>
        <fullName evidence="1">Aspartate alpha-decarboxylase</fullName>
    </alternativeName>
    <component>
        <recommendedName>
            <fullName evidence="1">Aspartate 1-decarboxylase beta chain</fullName>
        </recommendedName>
    </component>
    <component>
        <recommendedName>
            <fullName evidence="1">Aspartate 1-decarboxylase alpha chain</fullName>
        </recommendedName>
    </component>
</protein>
<proteinExistence type="inferred from homology"/>
<accession>B7I7B4</accession>
<sequence length="126" mass="13742">MLSRLLKCKIHRAVVTHAELHYEGSCAIDGVLMDLAGIREYEEIHVWNVTNGKRFTTYAIRGEDNSGIISVNGGAAHQADVGDLVIIATFGDFTEAEANVHKPRLVYANPDNTVNHTANCIPVQVA</sequence>
<name>PAND_ACIB5</name>
<comment type="function">
    <text evidence="1">Catalyzes the pyruvoyl-dependent decarboxylation of aspartate to produce beta-alanine.</text>
</comment>
<comment type="catalytic activity">
    <reaction evidence="1">
        <text>L-aspartate + H(+) = beta-alanine + CO2</text>
        <dbReference type="Rhea" id="RHEA:19497"/>
        <dbReference type="ChEBI" id="CHEBI:15378"/>
        <dbReference type="ChEBI" id="CHEBI:16526"/>
        <dbReference type="ChEBI" id="CHEBI:29991"/>
        <dbReference type="ChEBI" id="CHEBI:57966"/>
        <dbReference type="EC" id="4.1.1.11"/>
    </reaction>
</comment>
<comment type="cofactor">
    <cofactor evidence="1">
        <name>pyruvate</name>
        <dbReference type="ChEBI" id="CHEBI:15361"/>
    </cofactor>
    <text evidence="1">Binds 1 pyruvoyl group covalently per subunit.</text>
</comment>
<comment type="pathway">
    <text evidence="1">Cofactor biosynthesis; (R)-pantothenate biosynthesis; beta-alanine from L-aspartate: step 1/1.</text>
</comment>
<comment type="subunit">
    <text evidence="1">Heterooctamer of four alpha and four beta subunits.</text>
</comment>
<comment type="subcellular location">
    <subcellularLocation>
        <location evidence="1">Cytoplasm</location>
    </subcellularLocation>
</comment>
<comment type="PTM">
    <text evidence="1">Is synthesized initially as an inactive proenzyme, which is activated by self-cleavage at a specific serine bond to produce a beta-subunit with a hydroxyl group at its C-terminus and an alpha-subunit with a pyruvoyl group at its N-terminus.</text>
</comment>
<comment type="similarity">
    <text evidence="1">Belongs to the PanD family.</text>
</comment>
<gene>
    <name evidence="1" type="primary">panD</name>
    <name type="ordered locus">AB57_0879</name>
</gene>
<dbReference type="EC" id="4.1.1.11" evidence="1"/>
<dbReference type="EMBL" id="CP001182">
    <property type="protein sequence ID" value="ACJ40673.1"/>
    <property type="molecule type" value="Genomic_DNA"/>
</dbReference>
<dbReference type="RefSeq" id="WP_000952665.1">
    <property type="nucleotide sequence ID" value="NC_011586.2"/>
</dbReference>
<dbReference type="SMR" id="B7I7B4"/>
<dbReference type="KEGG" id="abn:AB57_0879"/>
<dbReference type="HOGENOM" id="CLU_115305_2_1_6"/>
<dbReference type="UniPathway" id="UPA00028">
    <property type="reaction ID" value="UER00002"/>
</dbReference>
<dbReference type="Proteomes" id="UP000007094">
    <property type="component" value="Chromosome"/>
</dbReference>
<dbReference type="GO" id="GO:0005829">
    <property type="term" value="C:cytosol"/>
    <property type="evidence" value="ECO:0007669"/>
    <property type="project" value="TreeGrafter"/>
</dbReference>
<dbReference type="GO" id="GO:0004068">
    <property type="term" value="F:aspartate 1-decarboxylase activity"/>
    <property type="evidence" value="ECO:0007669"/>
    <property type="project" value="UniProtKB-UniRule"/>
</dbReference>
<dbReference type="GO" id="GO:0006523">
    <property type="term" value="P:alanine biosynthetic process"/>
    <property type="evidence" value="ECO:0007669"/>
    <property type="project" value="InterPro"/>
</dbReference>
<dbReference type="GO" id="GO:0015940">
    <property type="term" value="P:pantothenate biosynthetic process"/>
    <property type="evidence" value="ECO:0007669"/>
    <property type="project" value="UniProtKB-UniRule"/>
</dbReference>
<dbReference type="CDD" id="cd06919">
    <property type="entry name" value="Asp_decarbox"/>
    <property type="match status" value="1"/>
</dbReference>
<dbReference type="Gene3D" id="2.40.40.20">
    <property type="match status" value="1"/>
</dbReference>
<dbReference type="HAMAP" id="MF_00446">
    <property type="entry name" value="PanD"/>
    <property type="match status" value="1"/>
</dbReference>
<dbReference type="InterPro" id="IPR009010">
    <property type="entry name" value="Asp_de-COase-like_dom_sf"/>
</dbReference>
<dbReference type="InterPro" id="IPR003190">
    <property type="entry name" value="Asp_decarbox"/>
</dbReference>
<dbReference type="NCBIfam" id="TIGR00223">
    <property type="entry name" value="panD"/>
    <property type="match status" value="1"/>
</dbReference>
<dbReference type="PANTHER" id="PTHR21012">
    <property type="entry name" value="ASPARTATE 1-DECARBOXYLASE"/>
    <property type="match status" value="1"/>
</dbReference>
<dbReference type="PANTHER" id="PTHR21012:SF0">
    <property type="entry name" value="ASPARTATE 1-DECARBOXYLASE"/>
    <property type="match status" value="1"/>
</dbReference>
<dbReference type="Pfam" id="PF02261">
    <property type="entry name" value="Asp_decarbox"/>
    <property type="match status" value="1"/>
</dbReference>
<dbReference type="PIRSF" id="PIRSF006246">
    <property type="entry name" value="Asp_decarbox"/>
    <property type="match status" value="1"/>
</dbReference>
<dbReference type="SUPFAM" id="SSF50692">
    <property type="entry name" value="ADC-like"/>
    <property type="match status" value="1"/>
</dbReference>
<feature type="chain" id="PRO_1000124735" description="Aspartate 1-decarboxylase beta chain" evidence="1">
    <location>
        <begin position="1"/>
        <end position="24"/>
    </location>
</feature>
<feature type="chain" id="PRO_1000124736" description="Aspartate 1-decarboxylase alpha chain" evidence="1">
    <location>
        <begin position="25"/>
        <end position="126"/>
    </location>
</feature>
<feature type="active site" description="Schiff-base intermediate with substrate; via pyruvic acid" evidence="1">
    <location>
        <position position="25"/>
    </location>
</feature>
<feature type="active site" description="Proton donor" evidence="1">
    <location>
        <position position="58"/>
    </location>
</feature>
<feature type="binding site" evidence="1">
    <location>
        <position position="57"/>
    </location>
    <ligand>
        <name>substrate</name>
    </ligand>
</feature>
<feature type="binding site" evidence="1">
    <location>
        <begin position="73"/>
        <end position="75"/>
    </location>
    <ligand>
        <name>substrate</name>
    </ligand>
</feature>
<feature type="modified residue" description="Pyruvic acid (Ser)" evidence="1">
    <location>
        <position position="25"/>
    </location>
</feature>
<evidence type="ECO:0000255" key="1">
    <source>
        <dbReference type="HAMAP-Rule" id="MF_00446"/>
    </source>
</evidence>
<keyword id="KW-0068">Autocatalytic cleavage</keyword>
<keyword id="KW-0963">Cytoplasm</keyword>
<keyword id="KW-0210">Decarboxylase</keyword>
<keyword id="KW-0456">Lyase</keyword>
<keyword id="KW-0566">Pantothenate biosynthesis</keyword>
<keyword id="KW-0670">Pyruvate</keyword>
<keyword id="KW-0704">Schiff base</keyword>
<keyword id="KW-0865">Zymogen</keyword>